<feature type="chain" id="PRO_1000062865" description="Transcriptional regulator MraZ">
    <location>
        <begin position="1"/>
        <end position="143"/>
    </location>
</feature>
<feature type="domain" description="SpoVT-AbrB 1" evidence="2">
    <location>
        <begin position="5"/>
        <end position="47"/>
    </location>
</feature>
<feature type="domain" description="SpoVT-AbrB 2" evidence="2">
    <location>
        <begin position="76"/>
        <end position="119"/>
    </location>
</feature>
<accession>A3DE35</accession>
<reference key="1">
    <citation type="submission" date="2007-02" db="EMBL/GenBank/DDBJ databases">
        <title>Complete sequence of Clostridium thermocellum ATCC 27405.</title>
        <authorList>
            <consortium name="US DOE Joint Genome Institute"/>
            <person name="Copeland A."/>
            <person name="Lucas S."/>
            <person name="Lapidus A."/>
            <person name="Barry K."/>
            <person name="Detter J.C."/>
            <person name="Glavina del Rio T."/>
            <person name="Hammon N."/>
            <person name="Israni S."/>
            <person name="Dalin E."/>
            <person name="Tice H."/>
            <person name="Pitluck S."/>
            <person name="Chertkov O."/>
            <person name="Brettin T."/>
            <person name="Bruce D."/>
            <person name="Han C."/>
            <person name="Tapia R."/>
            <person name="Gilna P."/>
            <person name="Schmutz J."/>
            <person name="Larimer F."/>
            <person name="Land M."/>
            <person name="Hauser L."/>
            <person name="Kyrpides N."/>
            <person name="Mikhailova N."/>
            <person name="Wu J.H.D."/>
            <person name="Newcomb M."/>
            <person name="Richardson P."/>
        </authorList>
    </citation>
    <scope>NUCLEOTIDE SEQUENCE [LARGE SCALE GENOMIC DNA]</scope>
    <source>
        <strain>ATCC 27405 / DSM 1237 / JCM 9322 / NBRC 103400 / NCIMB 10682 / NRRL B-4536 / VPI 7372</strain>
    </source>
</reference>
<protein>
    <recommendedName>
        <fullName>Transcriptional regulator MraZ</fullName>
    </recommendedName>
</protein>
<dbReference type="EMBL" id="CP000568">
    <property type="protein sequence ID" value="ABN52214.1"/>
    <property type="molecule type" value="Genomic_DNA"/>
</dbReference>
<dbReference type="RefSeq" id="WP_003515517.1">
    <property type="nucleotide sequence ID" value="NC_009012.1"/>
</dbReference>
<dbReference type="SMR" id="A3DE35"/>
<dbReference type="STRING" id="203119.Cthe_0982"/>
<dbReference type="GeneID" id="35805891"/>
<dbReference type="KEGG" id="cth:Cthe_0982"/>
<dbReference type="eggNOG" id="COG2001">
    <property type="taxonomic scope" value="Bacteria"/>
</dbReference>
<dbReference type="HOGENOM" id="CLU_107907_0_5_9"/>
<dbReference type="OrthoDB" id="9807753at2"/>
<dbReference type="Proteomes" id="UP000002145">
    <property type="component" value="Chromosome"/>
</dbReference>
<dbReference type="GO" id="GO:0005737">
    <property type="term" value="C:cytoplasm"/>
    <property type="evidence" value="ECO:0007669"/>
    <property type="project" value="UniProtKB-UniRule"/>
</dbReference>
<dbReference type="GO" id="GO:0009295">
    <property type="term" value="C:nucleoid"/>
    <property type="evidence" value="ECO:0007669"/>
    <property type="project" value="UniProtKB-SubCell"/>
</dbReference>
<dbReference type="GO" id="GO:0003700">
    <property type="term" value="F:DNA-binding transcription factor activity"/>
    <property type="evidence" value="ECO:0007669"/>
    <property type="project" value="UniProtKB-UniRule"/>
</dbReference>
<dbReference type="GO" id="GO:0000976">
    <property type="term" value="F:transcription cis-regulatory region binding"/>
    <property type="evidence" value="ECO:0007669"/>
    <property type="project" value="TreeGrafter"/>
</dbReference>
<dbReference type="GO" id="GO:2000143">
    <property type="term" value="P:negative regulation of DNA-templated transcription initiation"/>
    <property type="evidence" value="ECO:0007669"/>
    <property type="project" value="TreeGrafter"/>
</dbReference>
<dbReference type="CDD" id="cd16321">
    <property type="entry name" value="MraZ_C"/>
    <property type="match status" value="1"/>
</dbReference>
<dbReference type="CDD" id="cd16320">
    <property type="entry name" value="MraZ_N"/>
    <property type="match status" value="1"/>
</dbReference>
<dbReference type="FunFam" id="3.40.1550.20:FF:000002">
    <property type="entry name" value="Transcriptional regulator MraZ"/>
    <property type="match status" value="1"/>
</dbReference>
<dbReference type="Gene3D" id="3.40.1550.20">
    <property type="entry name" value="Transcriptional regulator MraZ domain"/>
    <property type="match status" value="1"/>
</dbReference>
<dbReference type="HAMAP" id="MF_01008">
    <property type="entry name" value="MraZ"/>
    <property type="match status" value="1"/>
</dbReference>
<dbReference type="InterPro" id="IPR003444">
    <property type="entry name" value="MraZ"/>
</dbReference>
<dbReference type="InterPro" id="IPR035644">
    <property type="entry name" value="MraZ_C"/>
</dbReference>
<dbReference type="InterPro" id="IPR020603">
    <property type="entry name" value="MraZ_dom"/>
</dbReference>
<dbReference type="InterPro" id="IPR035642">
    <property type="entry name" value="MraZ_N"/>
</dbReference>
<dbReference type="InterPro" id="IPR038619">
    <property type="entry name" value="MraZ_sf"/>
</dbReference>
<dbReference type="InterPro" id="IPR007159">
    <property type="entry name" value="SpoVT-AbrB_dom"/>
</dbReference>
<dbReference type="InterPro" id="IPR037914">
    <property type="entry name" value="SpoVT-AbrB_sf"/>
</dbReference>
<dbReference type="NCBIfam" id="TIGR00242">
    <property type="entry name" value="division/cell wall cluster transcriptional repressor MraZ"/>
    <property type="match status" value="1"/>
</dbReference>
<dbReference type="PANTHER" id="PTHR34701">
    <property type="entry name" value="TRANSCRIPTIONAL REGULATOR MRAZ"/>
    <property type="match status" value="1"/>
</dbReference>
<dbReference type="PANTHER" id="PTHR34701:SF1">
    <property type="entry name" value="TRANSCRIPTIONAL REGULATOR MRAZ"/>
    <property type="match status" value="1"/>
</dbReference>
<dbReference type="Pfam" id="PF02381">
    <property type="entry name" value="MraZ"/>
    <property type="match status" value="2"/>
</dbReference>
<dbReference type="SUPFAM" id="SSF89447">
    <property type="entry name" value="AbrB/MazE/MraZ-like"/>
    <property type="match status" value="1"/>
</dbReference>
<dbReference type="PROSITE" id="PS51740">
    <property type="entry name" value="SPOVT_ABRB"/>
    <property type="match status" value="2"/>
</dbReference>
<evidence type="ECO:0000255" key="1">
    <source>
        <dbReference type="HAMAP-Rule" id="MF_01008"/>
    </source>
</evidence>
<evidence type="ECO:0000255" key="2">
    <source>
        <dbReference type="PROSITE-ProRule" id="PRU01076"/>
    </source>
</evidence>
<keyword id="KW-0963">Cytoplasm</keyword>
<keyword id="KW-0238">DNA-binding</keyword>
<keyword id="KW-1185">Reference proteome</keyword>
<keyword id="KW-0677">Repeat</keyword>
<keyword id="KW-0804">Transcription</keyword>
<keyword id="KW-0805">Transcription regulation</keyword>
<organism>
    <name type="scientific">Acetivibrio thermocellus (strain ATCC 27405 / DSM 1237 / JCM 9322 / NBRC 103400 / NCIMB 10682 / NRRL B-4536 / VPI 7372)</name>
    <name type="common">Clostridium thermocellum</name>
    <dbReference type="NCBI Taxonomy" id="203119"/>
    <lineage>
        <taxon>Bacteria</taxon>
        <taxon>Bacillati</taxon>
        <taxon>Bacillota</taxon>
        <taxon>Clostridia</taxon>
        <taxon>Eubacteriales</taxon>
        <taxon>Oscillospiraceae</taxon>
        <taxon>Acetivibrio</taxon>
    </lineage>
</organism>
<sequence>MFYGEYQHSVDAKGRVIIPSKFREGLGEKFILTKGLDNCLFAYSLEEWSNLEAKLRSLPFTDKDVRAFVRFFFAGAAEVEVDKQGRILIPQNLREYAGLEKDVYIIGVSTRVEVWDKSKWESYSGDENMSAESIAEKMAMLGI</sequence>
<proteinExistence type="inferred from homology"/>
<gene>
    <name evidence="1" type="primary">mraZ</name>
    <name type="ordered locus">Cthe_0982</name>
</gene>
<comment type="subunit">
    <text evidence="1">Forms oligomers.</text>
</comment>
<comment type="subcellular location">
    <subcellularLocation>
        <location evidence="1">Cytoplasm</location>
        <location evidence="1">Nucleoid</location>
    </subcellularLocation>
</comment>
<comment type="similarity">
    <text evidence="1">Belongs to the MraZ family.</text>
</comment>
<name>MRAZ_ACET2</name>